<evidence type="ECO:0000255" key="1">
    <source>
        <dbReference type="HAMAP-Rule" id="MF_00040"/>
    </source>
</evidence>
<name>RRF_CAUVN</name>
<organism>
    <name type="scientific">Caulobacter vibrioides (strain NA1000 / CB15N)</name>
    <name type="common">Caulobacter crescentus</name>
    <dbReference type="NCBI Taxonomy" id="565050"/>
    <lineage>
        <taxon>Bacteria</taxon>
        <taxon>Pseudomonadati</taxon>
        <taxon>Pseudomonadota</taxon>
        <taxon>Alphaproteobacteria</taxon>
        <taxon>Caulobacterales</taxon>
        <taxon>Caulobacteraceae</taxon>
        <taxon>Caulobacter</taxon>
    </lineage>
</organism>
<keyword id="KW-0963">Cytoplasm</keyword>
<keyword id="KW-0648">Protein biosynthesis</keyword>
<keyword id="KW-1185">Reference proteome</keyword>
<protein>
    <recommendedName>
        <fullName evidence="1">Ribosome-recycling factor</fullName>
        <shortName evidence="1">RRF</shortName>
    </recommendedName>
    <alternativeName>
        <fullName evidence="1">Ribosome-releasing factor</fullName>
    </alternativeName>
</protein>
<accession>B8GWS0</accession>
<proteinExistence type="inferred from homology"/>
<dbReference type="EMBL" id="CP001340">
    <property type="protein sequence ID" value="ACL95462.1"/>
    <property type="molecule type" value="Genomic_DNA"/>
</dbReference>
<dbReference type="RefSeq" id="WP_010919786.1">
    <property type="nucleotide sequence ID" value="NC_011916.1"/>
</dbReference>
<dbReference type="RefSeq" id="YP_002517370.1">
    <property type="nucleotide sequence ID" value="NC_011916.1"/>
</dbReference>
<dbReference type="SMR" id="B8GWS0"/>
<dbReference type="GeneID" id="7333325"/>
<dbReference type="KEGG" id="ccs:CCNA_01997"/>
<dbReference type="PATRIC" id="fig|565050.3.peg.1956"/>
<dbReference type="HOGENOM" id="CLU_073981_2_0_5"/>
<dbReference type="OrthoDB" id="9804006at2"/>
<dbReference type="PhylomeDB" id="B8GWS0"/>
<dbReference type="Proteomes" id="UP000001364">
    <property type="component" value="Chromosome"/>
</dbReference>
<dbReference type="GO" id="GO:0005829">
    <property type="term" value="C:cytosol"/>
    <property type="evidence" value="ECO:0007669"/>
    <property type="project" value="GOC"/>
</dbReference>
<dbReference type="GO" id="GO:0043023">
    <property type="term" value="F:ribosomal large subunit binding"/>
    <property type="evidence" value="ECO:0007669"/>
    <property type="project" value="TreeGrafter"/>
</dbReference>
<dbReference type="GO" id="GO:0002184">
    <property type="term" value="P:cytoplasmic translational termination"/>
    <property type="evidence" value="ECO:0007669"/>
    <property type="project" value="TreeGrafter"/>
</dbReference>
<dbReference type="CDD" id="cd00520">
    <property type="entry name" value="RRF"/>
    <property type="match status" value="1"/>
</dbReference>
<dbReference type="FunFam" id="1.10.132.20:FF:000001">
    <property type="entry name" value="Ribosome-recycling factor"/>
    <property type="match status" value="1"/>
</dbReference>
<dbReference type="FunFam" id="3.30.1360.40:FF:000001">
    <property type="entry name" value="Ribosome-recycling factor"/>
    <property type="match status" value="1"/>
</dbReference>
<dbReference type="Gene3D" id="3.30.1360.40">
    <property type="match status" value="1"/>
</dbReference>
<dbReference type="Gene3D" id="1.10.132.20">
    <property type="entry name" value="Ribosome-recycling factor"/>
    <property type="match status" value="1"/>
</dbReference>
<dbReference type="HAMAP" id="MF_00040">
    <property type="entry name" value="RRF"/>
    <property type="match status" value="1"/>
</dbReference>
<dbReference type="InterPro" id="IPR002661">
    <property type="entry name" value="Ribosome_recyc_fac"/>
</dbReference>
<dbReference type="InterPro" id="IPR023584">
    <property type="entry name" value="Ribosome_recyc_fac_dom"/>
</dbReference>
<dbReference type="InterPro" id="IPR036191">
    <property type="entry name" value="RRF_sf"/>
</dbReference>
<dbReference type="NCBIfam" id="TIGR00496">
    <property type="entry name" value="frr"/>
    <property type="match status" value="1"/>
</dbReference>
<dbReference type="PANTHER" id="PTHR20982:SF3">
    <property type="entry name" value="MITOCHONDRIAL RIBOSOME RECYCLING FACTOR PSEUDO 1"/>
    <property type="match status" value="1"/>
</dbReference>
<dbReference type="PANTHER" id="PTHR20982">
    <property type="entry name" value="RIBOSOME RECYCLING FACTOR"/>
    <property type="match status" value="1"/>
</dbReference>
<dbReference type="Pfam" id="PF01765">
    <property type="entry name" value="RRF"/>
    <property type="match status" value="1"/>
</dbReference>
<dbReference type="SUPFAM" id="SSF55194">
    <property type="entry name" value="Ribosome recycling factor, RRF"/>
    <property type="match status" value="1"/>
</dbReference>
<sequence length="188" mass="20936">MAAAEKPVLSRYRDRMDKAVSALKEEFGSLRTGRASASLLDQVMVEAYGSTTPLNAVASVSVPEPRQINVSVWDRGVVVSVEKAIRASGLGLNPVVEGQNLRIPIPPLTEERRRDLQKIAGKYAEQQKIAVRNVRRDANDDLKKAEKDGAIAEDERKKMETEVQKMTDDAIKRIDEALKTKEHEIMQV</sequence>
<gene>
    <name evidence="1" type="primary">frr</name>
    <name type="ordered locus">CCNA_01997</name>
</gene>
<feature type="chain" id="PRO_1000194910" description="Ribosome-recycling factor">
    <location>
        <begin position="1"/>
        <end position="188"/>
    </location>
</feature>
<reference key="1">
    <citation type="journal article" date="2010" name="J. Bacteriol.">
        <title>The genetic basis of laboratory adaptation in Caulobacter crescentus.</title>
        <authorList>
            <person name="Marks M.E."/>
            <person name="Castro-Rojas C.M."/>
            <person name="Teiling C."/>
            <person name="Du L."/>
            <person name="Kapatral V."/>
            <person name="Walunas T.L."/>
            <person name="Crosson S."/>
        </authorList>
    </citation>
    <scope>NUCLEOTIDE SEQUENCE [LARGE SCALE GENOMIC DNA]</scope>
    <source>
        <strain>NA1000 / CB15N</strain>
    </source>
</reference>
<comment type="function">
    <text evidence="1">Responsible for the release of ribosomes from messenger RNA at the termination of protein biosynthesis. May increase the efficiency of translation by recycling ribosomes from one round of translation to another.</text>
</comment>
<comment type="subcellular location">
    <subcellularLocation>
        <location evidence="1">Cytoplasm</location>
    </subcellularLocation>
</comment>
<comment type="similarity">
    <text evidence="1">Belongs to the RRF family.</text>
</comment>